<comment type="function">
    <text evidence="1">Plays an essential role in the initiation and regulation of chromosomal replication. ATP-DnaA binds to the origin of replication (oriC) to initiate formation of the DNA replication initiation complex once per cell cycle. Binds the DnaA box (a 9 base pair repeat at the origin) and separates the double-stranded (ds)DNA. Forms a right-handed helical filament on oriC DNA; dsDNA binds to the exterior of the filament while single-stranded (ss)DNA is stabiized in the filament's interior. The ATP-DnaA-oriC complex binds and stabilizes one strand of the AT-rich DNA unwinding element (DUE), permitting loading of DNA polymerase. After initiation quickly degrades to an ADP-DnaA complex that is not apt for DNA replication. Binds acidic phospholipids.</text>
</comment>
<comment type="subunit">
    <text evidence="1">Oligomerizes as a right-handed, spiral filament on DNA at oriC.</text>
</comment>
<comment type="subcellular location">
    <subcellularLocation>
        <location evidence="1">Cytoplasm</location>
    </subcellularLocation>
</comment>
<comment type="domain">
    <text evidence="1">Domain I is involved in oligomerization and binding regulators, domain II is flexibile and of varying length in different bacteria, domain III forms the AAA+ region, while domain IV binds dsDNA.</text>
</comment>
<comment type="similarity">
    <text evidence="1">Belongs to the DnaA family.</text>
</comment>
<feature type="chain" id="PRO_0000114277" description="Chromosomal replication initiator protein DnaA">
    <location>
        <begin position="1"/>
        <end position="451"/>
    </location>
</feature>
<feature type="region of interest" description="Domain I, interacts with DnaA modulators" evidence="1">
    <location>
        <begin position="1"/>
        <end position="77"/>
    </location>
</feature>
<feature type="region of interest" description="Domain II" evidence="1">
    <location>
        <begin position="77"/>
        <end position="110"/>
    </location>
</feature>
<feature type="region of interest" description="Domain III, AAA+ region" evidence="1">
    <location>
        <begin position="111"/>
        <end position="329"/>
    </location>
</feature>
<feature type="region of interest" description="Domain IV, binds dsDNA" evidence="1">
    <location>
        <begin position="330"/>
        <end position="451"/>
    </location>
</feature>
<feature type="binding site" evidence="1">
    <location>
        <position position="155"/>
    </location>
    <ligand>
        <name>ATP</name>
        <dbReference type="ChEBI" id="CHEBI:30616"/>
    </ligand>
</feature>
<feature type="binding site" evidence="1">
    <location>
        <position position="157"/>
    </location>
    <ligand>
        <name>ATP</name>
        <dbReference type="ChEBI" id="CHEBI:30616"/>
    </ligand>
</feature>
<feature type="binding site" evidence="1">
    <location>
        <position position="158"/>
    </location>
    <ligand>
        <name>ATP</name>
        <dbReference type="ChEBI" id="CHEBI:30616"/>
    </ligand>
</feature>
<feature type="binding site" evidence="1">
    <location>
        <position position="159"/>
    </location>
    <ligand>
        <name>ATP</name>
        <dbReference type="ChEBI" id="CHEBI:30616"/>
    </ligand>
</feature>
<accession>Q5XEM7</accession>
<dbReference type="EMBL" id="CP000003">
    <property type="protein sequence ID" value="AAT86136.1"/>
    <property type="molecule type" value="Genomic_DNA"/>
</dbReference>
<dbReference type="RefSeq" id="WP_002987659.1">
    <property type="nucleotide sequence ID" value="NC_006086.1"/>
</dbReference>
<dbReference type="SMR" id="Q5XEM7"/>
<dbReference type="GeneID" id="69899953"/>
<dbReference type="KEGG" id="spa:M6_Spy0001"/>
<dbReference type="HOGENOM" id="CLU_026910_3_2_9"/>
<dbReference type="Proteomes" id="UP000001167">
    <property type="component" value="Chromosome"/>
</dbReference>
<dbReference type="GO" id="GO:0005737">
    <property type="term" value="C:cytoplasm"/>
    <property type="evidence" value="ECO:0007669"/>
    <property type="project" value="UniProtKB-SubCell"/>
</dbReference>
<dbReference type="GO" id="GO:0005886">
    <property type="term" value="C:plasma membrane"/>
    <property type="evidence" value="ECO:0007669"/>
    <property type="project" value="TreeGrafter"/>
</dbReference>
<dbReference type="GO" id="GO:0005524">
    <property type="term" value="F:ATP binding"/>
    <property type="evidence" value="ECO:0007669"/>
    <property type="project" value="UniProtKB-UniRule"/>
</dbReference>
<dbReference type="GO" id="GO:0016887">
    <property type="term" value="F:ATP hydrolysis activity"/>
    <property type="evidence" value="ECO:0007669"/>
    <property type="project" value="InterPro"/>
</dbReference>
<dbReference type="GO" id="GO:0003688">
    <property type="term" value="F:DNA replication origin binding"/>
    <property type="evidence" value="ECO:0007669"/>
    <property type="project" value="UniProtKB-UniRule"/>
</dbReference>
<dbReference type="GO" id="GO:0008289">
    <property type="term" value="F:lipid binding"/>
    <property type="evidence" value="ECO:0007669"/>
    <property type="project" value="UniProtKB-KW"/>
</dbReference>
<dbReference type="GO" id="GO:0006270">
    <property type="term" value="P:DNA replication initiation"/>
    <property type="evidence" value="ECO:0007669"/>
    <property type="project" value="UniProtKB-UniRule"/>
</dbReference>
<dbReference type="GO" id="GO:0006275">
    <property type="term" value="P:regulation of DNA replication"/>
    <property type="evidence" value="ECO:0007669"/>
    <property type="project" value="UniProtKB-UniRule"/>
</dbReference>
<dbReference type="CDD" id="cd00009">
    <property type="entry name" value="AAA"/>
    <property type="match status" value="1"/>
</dbReference>
<dbReference type="CDD" id="cd06571">
    <property type="entry name" value="Bac_DnaA_C"/>
    <property type="match status" value="1"/>
</dbReference>
<dbReference type="FunFam" id="1.10.1750.10:FF:000002">
    <property type="entry name" value="Chromosomal replication initiator protein DnaA"/>
    <property type="match status" value="1"/>
</dbReference>
<dbReference type="FunFam" id="3.40.50.300:FF:000668">
    <property type="entry name" value="Chromosomal replication initiator protein DnaA"/>
    <property type="match status" value="1"/>
</dbReference>
<dbReference type="Gene3D" id="1.10.1750.10">
    <property type="match status" value="1"/>
</dbReference>
<dbReference type="Gene3D" id="1.10.8.60">
    <property type="match status" value="1"/>
</dbReference>
<dbReference type="Gene3D" id="3.40.50.300">
    <property type="entry name" value="P-loop containing nucleotide triphosphate hydrolases"/>
    <property type="match status" value="1"/>
</dbReference>
<dbReference type="HAMAP" id="MF_00377">
    <property type="entry name" value="DnaA_bact"/>
    <property type="match status" value="1"/>
</dbReference>
<dbReference type="InterPro" id="IPR003593">
    <property type="entry name" value="AAA+_ATPase"/>
</dbReference>
<dbReference type="InterPro" id="IPR001957">
    <property type="entry name" value="Chromosome_initiator_DnaA"/>
</dbReference>
<dbReference type="InterPro" id="IPR020591">
    <property type="entry name" value="Chromosome_initiator_DnaA-like"/>
</dbReference>
<dbReference type="InterPro" id="IPR018312">
    <property type="entry name" value="Chromosome_initiator_DnaA_CS"/>
</dbReference>
<dbReference type="InterPro" id="IPR013159">
    <property type="entry name" value="DnaA_C"/>
</dbReference>
<dbReference type="InterPro" id="IPR013317">
    <property type="entry name" value="DnaA_dom"/>
</dbReference>
<dbReference type="InterPro" id="IPR027417">
    <property type="entry name" value="P-loop_NTPase"/>
</dbReference>
<dbReference type="InterPro" id="IPR010921">
    <property type="entry name" value="Trp_repressor/repl_initiator"/>
</dbReference>
<dbReference type="NCBIfam" id="TIGR00362">
    <property type="entry name" value="DnaA"/>
    <property type="match status" value="1"/>
</dbReference>
<dbReference type="PANTHER" id="PTHR30050">
    <property type="entry name" value="CHROMOSOMAL REPLICATION INITIATOR PROTEIN DNAA"/>
    <property type="match status" value="1"/>
</dbReference>
<dbReference type="PANTHER" id="PTHR30050:SF2">
    <property type="entry name" value="CHROMOSOMAL REPLICATION INITIATOR PROTEIN DNAA"/>
    <property type="match status" value="1"/>
</dbReference>
<dbReference type="Pfam" id="PF00308">
    <property type="entry name" value="Bac_DnaA"/>
    <property type="match status" value="1"/>
</dbReference>
<dbReference type="Pfam" id="PF08299">
    <property type="entry name" value="Bac_DnaA_C"/>
    <property type="match status" value="1"/>
</dbReference>
<dbReference type="PRINTS" id="PR00051">
    <property type="entry name" value="DNAA"/>
</dbReference>
<dbReference type="SMART" id="SM00382">
    <property type="entry name" value="AAA"/>
    <property type="match status" value="1"/>
</dbReference>
<dbReference type="SMART" id="SM00760">
    <property type="entry name" value="Bac_DnaA_C"/>
    <property type="match status" value="1"/>
</dbReference>
<dbReference type="SUPFAM" id="SSF52540">
    <property type="entry name" value="P-loop containing nucleoside triphosphate hydrolases"/>
    <property type="match status" value="1"/>
</dbReference>
<dbReference type="SUPFAM" id="SSF48295">
    <property type="entry name" value="TrpR-like"/>
    <property type="match status" value="1"/>
</dbReference>
<dbReference type="PROSITE" id="PS01008">
    <property type="entry name" value="DNAA"/>
    <property type="match status" value="1"/>
</dbReference>
<reference key="1">
    <citation type="journal article" date="2004" name="J. Infect. Dis.">
        <title>Progress toward characterization of the group A Streptococcus metagenome: complete genome sequence of a macrolide-resistant serotype M6 strain.</title>
        <authorList>
            <person name="Banks D.J."/>
            <person name="Porcella S.F."/>
            <person name="Barbian K.D."/>
            <person name="Beres S.B."/>
            <person name="Philips L.E."/>
            <person name="Voyich J.M."/>
            <person name="DeLeo F.R."/>
            <person name="Martin J.M."/>
            <person name="Somerville G.A."/>
            <person name="Musser J.M."/>
        </authorList>
    </citation>
    <scope>NUCLEOTIDE SEQUENCE [LARGE SCALE GENOMIC DNA]</scope>
    <source>
        <strain>ATCC BAA-946 / MGAS10394</strain>
    </source>
</reference>
<proteinExistence type="inferred from homology"/>
<name>DNAA_STRP6</name>
<sequence length="451" mass="51665">MTENEQIFWNRVLELAQSQLKQATYEFFVHDARLLKVDKHIATIYLDQMKELFWEKNLKDVILTAGFEVYNAQISVDYVFEEDLMIEQNQTKINQKPKQQALNSLPTVTSDLNSKYSFENFIQGDENRWAVAASIAVANTPGTTYNPLFIWGGPGLGKTHLLNAIGNSVLLENPNARIKYITAENFINEFVIHIRLDTMDELKEKFRNLDLLLIDDIQSLAKKTLSGTQEEFFNTFNALHNNNKQIVLTSDRTPDHLNDLEDRLVTRFKWGLTVNITPPDFETRVAILTNKIQEYNFIFPQDTIEYLAGQFDSNVRDLEGALKDISLVANFKQIDTITVDIAAEAIRARKQDGPKMTVIPIEEIQAQVGKFYGVTVKEIKATKRTQNIVLARQVAMFLAREMTDNSLPKIGKEFGGRDHSTVLHAYNKIKNMISQDESLRIEIETIKNKIK</sequence>
<organism>
    <name type="scientific">Streptococcus pyogenes serotype M6 (strain ATCC BAA-946 / MGAS10394)</name>
    <dbReference type="NCBI Taxonomy" id="286636"/>
    <lineage>
        <taxon>Bacteria</taxon>
        <taxon>Bacillati</taxon>
        <taxon>Bacillota</taxon>
        <taxon>Bacilli</taxon>
        <taxon>Lactobacillales</taxon>
        <taxon>Streptococcaceae</taxon>
        <taxon>Streptococcus</taxon>
    </lineage>
</organism>
<keyword id="KW-0067">ATP-binding</keyword>
<keyword id="KW-0963">Cytoplasm</keyword>
<keyword id="KW-0235">DNA replication</keyword>
<keyword id="KW-0238">DNA-binding</keyword>
<keyword id="KW-0446">Lipid-binding</keyword>
<keyword id="KW-0547">Nucleotide-binding</keyword>
<gene>
    <name evidence="1" type="primary">dnaA</name>
    <name type="ordered locus">M6_Spy0001</name>
</gene>
<protein>
    <recommendedName>
        <fullName evidence="1">Chromosomal replication initiator protein DnaA</fullName>
    </recommendedName>
</protein>
<evidence type="ECO:0000255" key="1">
    <source>
        <dbReference type="HAMAP-Rule" id="MF_00377"/>
    </source>
</evidence>